<feature type="chain" id="PRO_1000148158" description="6-phosphogluconolactonase">
    <location>
        <begin position="1"/>
        <end position="330"/>
    </location>
</feature>
<proteinExistence type="inferred from homology"/>
<sequence>MKQVVYTASPESQQIHAWQLNNEGALTLLQVVDAPGQVQPMVVSPDKSFLYVGVRPDFRVVAYQIDAEGKLKEAGHAPLPGSPTHISTDRQGRFIFVGSYNDACVSVTPIGENGLPGEPLQVVKGLEGCHSANIDLNNQTLFVPALKQDRIALFSLDKQGKLTPRAQAEVKTRSGAGPRHMAFHPNQRYAYSVNELDSSVDVWDISGDEVKKVQSVDALPEGFSDTRWAADIHITPDGRHLYSCDRTASNITIFSISAEGSSLKVEGYQPTETQPRGFNIDHSGQYLVAAGQKSHHIEVYKISADRGLLQPLARYAVGQGPMWVVINKLD</sequence>
<name>6PGL_ERWT9</name>
<protein>
    <recommendedName>
        <fullName evidence="1">6-phosphogluconolactonase</fullName>
        <shortName evidence="1">6-P-gluconolactonase</shortName>
        <ecNumber evidence="1">3.1.1.31</ecNumber>
    </recommendedName>
</protein>
<evidence type="ECO:0000255" key="1">
    <source>
        <dbReference type="HAMAP-Rule" id="MF_01605"/>
    </source>
</evidence>
<comment type="function">
    <text evidence="1">Catalyzes the hydrolysis of 6-phosphogluconolactone to 6-phosphogluconate.</text>
</comment>
<comment type="catalytic activity">
    <reaction evidence="1">
        <text>6-phospho-D-glucono-1,5-lactone + H2O = 6-phospho-D-gluconate + H(+)</text>
        <dbReference type="Rhea" id="RHEA:12556"/>
        <dbReference type="ChEBI" id="CHEBI:15377"/>
        <dbReference type="ChEBI" id="CHEBI:15378"/>
        <dbReference type="ChEBI" id="CHEBI:57955"/>
        <dbReference type="ChEBI" id="CHEBI:58759"/>
        <dbReference type="EC" id="3.1.1.31"/>
    </reaction>
</comment>
<comment type="pathway">
    <text evidence="1">Carbohydrate degradation; pentose phosphate pathway; D-ribulose 5-phosphate from D-glucose 6-phosphate (oxidative stage): step 2/3.</text>
</comment>
<comment type="similarity">
    <text evidence="1">Belongs to the cycloisomerase 2 family.</text>
</comment>
<keyword id="KW-0119">Carbohydrate metabolism</keyword>
<keyword id="KW-0313">Glucose metabolism</keyword>
<keyword id="KW-0378">Hydrolase</keyword>
<keyword id="KW-1185">Reference proteome</keyword>
<reference key="1">
    <citation type="journal article" date="2008" name="Environ. Microbiol.">
        <title>The genome of Erwinia tasmaniensis strain Et1/99, a non-pathogenic bacterium in the genus Erwinia.</title>
        <authorList>
            <person name="Kube M."/>
            <person name="Migdoll A.M."/>
            <person name="Mueller I."/>
            <person name="Kuhl H."/>
            <person name="Beck A."/>
            <person name="Reinhardt R."/>
            <person name="Geider K."/>
        </authorList>
    </citation>
    <scope>NUCLEOTIDE SEQUENCE [LARGE SCALE GENOMIC DNA]</scope>
    <source>
        <strain>DSM 17950 / CFBP 7177 / CIP 109463 / NCPPB 4357 / Et1/99</strain>
    </source>
</reference>
<organism>
    <name type="scientific">Erwinia tasmaniensis (strain DSM 17950 / CFBP 7177 / CIP 109463 / NCPPB 4357 / Et1/99)</name>
    <dbReference type="NCBI Taxonomy" id="465817"/>
    <lineage>
        <taxon>Bacteria</taxon>
        <taxon>Pseudomonadati</taxon>
        <taxon>Pseudomonadota</taxon>
        <taxon>Gammaproteobacteria</taxon>
        <taxon>Enterobacterales</taxon>
        <taxon>Erwiniaceae</taxon>
        <taxon>Erwinia</taxon>
    </lineage>
</organism>
<gene>
    <name evidence="1" type="primary">pgl</name>
    <name type="ordered locus">ETA_22700</name>
</gene>
<dbReference type="EC" id="3.1.1.31" evidence="1"/>
<dbReference type="EMBL" id="CU468135">
    <property type="protein sequence ID" value="CAO97316.1"/>
    <property type="molecule type" value="Genomic_DNA"/>
</dbReference>
<dbReference type="RefSeq" id="WP_012441985.1">
    <property type="nucleotide sequence ID" value="NC_010694.1"/>
</dbReference>
<dbReference type="SMR" id="B2VBU3"/>
<dbReference type="STRING" id="465817.ETA_22700"/>
<dbReference type="KEGG" id="eta:ETA_22700"/>
<dbReference type="eggNOG" id="COG2706">
    <property type="taxonomic scope" value="Bacteria"/>
</dbReference>
<dbReference type="HOGENOM" id="CLU_038716_2_0_6"/>
<dbReference type="OrthoDB" id="9790815at2"/>
<dbReference type="UniPathway" id="UPA00115">
    <property type="reaction ID" value="UER00409"/>
</dbReference>
<dbReference type="Proteomes" id="UP000001726">
    <property type="component" value="Chromosome"/>
</dbReference>
<dbReference type="GO" id="GO:0005829">
    <property type="term" value="C:cytosol"/>
    <property type="evidence" value="ECO:0007669"/>
    <property type="project" value="TreeGrafter"/>
</dbReference>
<dbReference type="GO" id="GO:0017057">
    <property type="term" value="F:6-phosphogluconolactonase activity"/>
    <property type="evidence" value="ECO:0007669"/>
    <property type="project" value="UniProtKB-UniRule"/>
</dbReference>
<dbReference type="GO" id="GO:0006006">
    <property type="term" value="P:glucose metabolic process"/>
    <property type="evidence" value="ECO:0007669"/>
    <property type="project" value="UniProtKB-KW"/>
</dbReference>
<dbReference type="GO" id="GO:0009051">
    <property type="term" value="P:pentose-phosphate shunt, oxidative branch"/>
    <property type="evidence" value="ECO:0007669"/>
    <property type="project" value="UniProtKB-UniRule"/>
</dbReference>
<dbReference type="Gene3D" id="2.130.10.10">
    <property type="entry name" value="YVTN repeat-like/Quinoprotein amine dehydrogenase"/>
    <property type="match status" value="1"/>
</dbReference>
<dbReference type="HAMAP" id="MF_01605">
    <property type="entry name" value="6P_gluconolactonase"/>
    <property type="match status" value="1"/>
</dbReference>
<dbReference type="InterPro" id="IPR022528">
    <property type="entry name" value="6-phosphogluconolactonase_YbhE"/>
</dbReference>
<dbReference type="InterPro" id="IPR050282">
    <property type="entry name" value="Cycloisomerase_2"/>
</dbReference>
<dbReference type="InterPro" id="IPR019405">
    <property type="entry name" value="Lactonase_7-beta_prop"/>
</dbReference>
<dbReference type="InterPro" id="IPR011045">
    <property type="entry name" value="N2O_reductase_N"/>
</dbReference>
<dbReference type="InterPro" id="IPR015943">
    <property type="entry name" value="WD40/YVTN_repeat-like_dom_sf"/>
</dbReference>
<dbReference type="NCBIfam" id="NF008258">
    <property type="entry name" value="PRK11028.1"/>
    <property type="match status" value="1"/>
</dbReference>
<dbReference type="PANTHER" id="PTHR30344:SF1">
    <property type="entry name" value="6-PHOSPHOGLUCONOLACTONASE"/>
    <property type="match status" value="1"/>
</dbReference>
<dbReference type="PANTHER" id="PTHR30344">
    <property type="entry name" value="6-PHOSPHOGLUCONOLACTONASE-RELATED"/>
    <property type="match status" value="1"/>
</dbReference>
<dbReference type="Pfam" id="PF10282">
    <property type="entry name" value="Lactonase"/>
    <property type="match status" value="1"/>
</dbReference>
<dbReference type="SUPFAM" id="SSF50974">
    <property type="entry name" value="Nitrous oxide reductase, N-terminal domain"/>
    <property type="match status" value="1"/>
</dbReference>
<accession>B2VBU3</accession>